<gene>
    <name evidence="1" type="primary">rplT</name>
    <name type="ordered locus">RSc1580</name>
    <name type="ORF">RS03942</name>
</gene>
<accession>Q8XZ26</accession>
<dbReference type="EMBL" id="AL646052">
    <property type="protein sequence ID" value="CAD15282.1"/>
    <property type="molecule type" value="Genomic_DNA"/>
</dbReference>
<dbReference type="RefSeq" id="WP_003264301.1">
    <property type="nucleotide sequence ID" value="NC_003295.1"/>
</dbReference>
<dbReference type="SMR" id="Q8XZ26"/>
<dbReference type="STRING" id="267608.RSc1580"/>
<dbReference type="EnsemblBacteria" id="CAD15282">
    <property type="protein sequence ID" value="CAD15282"/>
    <property type="gene ID" value="RSc1580"/>
</dbReference>
<dbReference type="GeneID" id="97320996"/>
<dbReference type="KEGG" id="rso:RSc1580"/>
<dbReference type="eggNOG" id="COG0292">
    <property type="taxonomic scope" value="Bacteria"/>
</dbReference>
<dbReference type="HOGENOM" id="CLU_123265_0_1_4"/>
<dbReference type="Proteomes" id="UP000001436">
    <property type="component" value="Chromosome"/>
</dbReference>
<dbReference type="GO" id="GO:1990904">
    <property type="term" value="C:ribonucleoprotein complex"/>
    <property type="evidence" value="ECO:0007669"/>
    <property type="project" value="UniProtKB-KW"/>
</dbReference>
<dbReference type="GO" id="GO:0005840">
    <property type="term" value="C:ribosome"/>
    <property type="evidence" value="ECO:0007669"/>
    <property type="project" value="UniProtKB-KW"/>
</dbReference>
<dbReference type="GO" id="GO:0019843">
    <property type="term" value="F:rRNA binding"/>
    <property type="evidence" value="ECO:0007669"/>
    <property type="project" value="UniProtKB-UniRule"/>
</dbReference>
<dbReference type="GO" id="GO:0003735">
    <property type="term" value="F:structural constituent of ribosome"/>
    <property type="evidence" value="ECO:0007669"/>
    <property type="project" value="InterPro"/>
</dbReference>
<dbReference type="GO" id="GO:0000027">
    <property type="term" value="P:ribosomal large subunit assembly"/>
    <property type="evidence" value="ECO:0007669"/>
    <property type="project" value="UniProtKB-UniRule"/>
</dbReference>
<dbReference type="GO" id="GO:0006412">
    <property type="term" value="P:translation"/>
    <property type="evidence" value="ECO:0007669"/>
    <property type="project" value="InterPro"/>
</dbReference>
<dbReference type="CDD" id="cd07026">
    <property type="entry name" value="Ribosomal_L20"/>
    <property type="match status" value="1"/>
</dbReference>
<dbReference type="FunFam" id="1.10.1900.20:FF:000001">
    <property type="entry name" value="50S ribosomal protein L20"/>
    <property type="match status" value="1"/>
</dbReference>
<dbReference type="Gene3D" id="6.10.160.10">
    <property type="match status" value="1"/>
</dbReference>
<dbReference type="Gene3D" id="1.10.1900.20">
    <property type="entry name" value="Ribosomal protein L20"/>
    <property type="match status" value="1"/>
</dbReference>
<dbReference type="HAMAP" id="MF_00382">
    <property type="entry name" value="Ribosomal_bL20"/>
    <property type="match status" value="1"/>
</dbReference>
<dbReference type="InterPro" id="IPR005813">
    <property type="entry name" value="Ribosomal_bL20"/>
</dbReference>
<dbReference type="InterPro" id="IPR049946">
    <property type="entry name" value="RIBOSOMAL_L20_CS"/>
</dbReference>
<dbReference type="InterPro" id="IPR035566">
    <property type="entry name" value="Ribosomal_protein_bL20_C"/>
</dbReference>
<dbReference type="NCBIfam" id="TIGR01032">
    <property type="entry name" value="rplT_bact"/>
    <property type="match status" value="1"/>
</dbReference>
<dbReference type="PANTHER" id="PTHR10986">
    <property type="entry name" value="39S RIBOSOMAL PROTEIN L20"/>
    <property type="match status" value="1"/>
</dbReference>
<dbReference type="Pfam" id="PF00453">
    <property type="entry name" value="Ribosomal_L20"/>
    <property type="match status" value="1"/>
</dbReference>
<dbReference type="PRINTS" id="PR00062">
    <property type="entry name" value="RIBOSOMALL20"/>
</dbReference>
<dbReference type="SUPFAM" id="SSF74731">
    <property type="entry name" value="Ribosomal protein L20"/>
    <property type="match status" value="1"/>
</dbReference>
<dbReference type="PROSITE" id="PS00937">
    <property type="entry name" value="RIBOSOMAL_L20"/>
    <property type="match status" value="1"/>
</dbReference>
<reference key="1">
    <citation type="journal article" date="2002" name="Nature">
        <title>Genome sequence of the plant pathogen Ralstonia solanacearum.</title>
        <authorList>
            <person name="Salanoubat M."/>
            <person name="Genin S."/>
            <person name="Artiguenave F."/>
            <person name="Gouzy J."/>
            <person name="Mangenot S."/>
            <person name="Arlat M."/>
            <person name="Billault A."/>
            <person name="Brottier P."/>
            <person name="Camus J.-C."/>
            <person name="Cattolico L."/>
            <person name="Chandler M."/>
            <person name="Choisne N."/>
            <person name="Claudel-Renard C."/>
            <person name="Cunnac S."/>
            <person name="Demange N."/>
            <person name="Gaspin C."/>
            <person name="Lavie M."/>
            <person name="Moisan A."/>
            <person name="Robert C."/>
            <person name="Saurin W."/>
            <person name="Schiex T."/>
            <person name="Siguier P."/>
            <person name="Thebault P."/>
            <person name="Whalen M."/>
            <person name="Wincker P."/>
            <person name="Levy M."/>
            <person name="Weissenbach J."/>
            <person name="Boucher C.A."/>
        </authorList>
    </citation>
    <scope>NUCLEOTIDE SEQUENCE [LARGE SCALE GENOMIC DNA]</scope>
    <source>
        <strain>ATCC BAA-1114 / GMI1000</strain>
    </source>
</reference>
<protein>
    <recommendedName>
        <fullName evidence="1">Large ribosomal subunit protein bL20</fullName>
    </recommendedName>
    <alternativeName>
        <fullName evidence="2">50S ribosomal protein L20</fullName>
    </alternativeName>
</protein>
<organism>
    <name type="scientific">Ralstonia nicotianae (strain ATCC BAA-1114 / GMI1000)</name>
    <name type="common">Ralstonia solanacearum</name>
    <dbReference type="NCBI Taxonomy" id="267608"/>
    <lineage>
        <taxon>Bacteria</taxon>
        <taxon>Pseudomonadati</taxon>
        <taxon>Pseudomonadota</taxon>
        <taxon>Betaproteobacteria</taxon>
        <taxon>Burkholderiales</taxon>
        <taxon>Burkholderiaceae</taxon>
        <taxon>Ralstonia</taxon>
        <taxon>Ralstonia solanacearum species complex</taxon>
    </lineage>
</organism>
<keyword id="KW-1185">Reference proteome</keyword>
<keyword id="KW-0687">Ribonucleoprotein</keyword>
<keyword id="KW-0689">Ribosomal protein</keyword>
<keyword id="KW-0694">RNA-binding</keyword>
<keyword id="KW-0699">rRNA-binding</keyword>
<comment type="function">
    <text evidence="1">Binds directly to 23S ribosomal RNA and is necessary for the in vitro assembly process of the 50S ribosomal subunit. It is not involved in the protein synthesizing functions of that subunit.</text>
</comment>
<comment type="similarity">
    <text evidence="1">Belongs to the bacterial ribosomal protein bL20 family.</text>
</comment>
<evidence type="ECO:0000255" key="1">
    <source>
        <dbReference type="HAMAP-Rule" id="MF_00382"/>
    </source>
</evidence>
<evidence type="ECO:0000305" key="2"/>
<sequence>MPRVKRGVTARARHKKVIDAAKGYRGRRNNVYRIAKQAVMRAGQYAYRDRRNKKRVFRALWIARINAGAREHGLSYSKFMNGLKKASIELDRKVLSDMAIHDKVAFAAIVNQVKANVA</sequence>
<feature type="chain" id="PRO_0000177211" description="Large ribosomal subunit protein bL20">
    <location>
        <begin position="1"/>
        <end position="118"/>
    </location>
</feature>
<name>RL20_RALN1</name>
<proteinExistence type="inferred from homology"/>